<name>CYSJ_SHEON</name>
<organism>
    <name type="scientific">Shewanella oneidensis (strain ATCC 700550 / JCM 31522 / CIP 106686 / LMG 19005 / NCIMB 14063 / MR-1)</name>
    <dbReference type="NCBI Taxonomy" id="211586"/>
    <lineage>
        <taxon>Bacteria</taxon>
        <taxon>Pseudomonadati</taxon>
        <taxon>Pseudomonadota</taxon>
        <taxon>Gammaproteobacteria</taxon>
        <taxon>Alteromonadales</taxon>
        <taxon>Shewanellaceae</taxon>
        <taxon>Shewanella</taxon>
    </lineage>
</organism>
<evidence type="ECO:0000255" key="1">
    <source>
        <dbReference type="HAMAP-Rule" id="MF_01541"/>
    </source>
</evidence>
<keyword id="KW-0028">Amino-acid biosynthesis</keyword>
<keyword id="KW-0198">Cysteine biosynthesis</keyword>
<keyword id="KW-0249">Electron transport</keyword>
<keyword id="KW-0274">FAD</keyword>
<keyword id="KW-0285">Flavoprotein</keyword>
<keyword id="KW-0288">FMN</keyword>
<keyword id="KW-0521">NADP</keyword>
<keyword id="KW-0560">Oxidoreductase</keyword>
<keyword id="KW-1185">Reference proteome</keyword>
<keyword id="KW-0813">Transport</keyword>
<dbReference type="EC" id="1.8.1.2" evidence="1"/>
<dbReference type="EMBL" id="AE014299">
    <property type="protein sequence ID" value="AAN56721.1"/>
    <property type="molecule type" value="Genomic_DNA"/>
</dbReference>
<dbReference type="RefSeq" id="NP_719277.1">
    <property type="nucleotide sequence ID" value="NC_004347.2"/>
</dbReference>
<dbReference type="RefSeq" id="WP_011073521.1">
    <property type="nucleotide sequence ID" value="NC_004347.2"/>
</dbReference>
<dbReference type="SMR" id="Q8EAZ9"/>
<dbReference type="STRING" id="211586.SO_3738"/>
<dbReference type="PaxDb" id="211586-SO_3738"/>
<dbReference type="KEGG" id="son:SO_3738"/>
<dbReference type="PATRIC" id="fig|211586.12.peg.3621"/>
<dbReference type="eggNOG" id="COG0369">
    <property type="taxonomic scope" value="Bacteria"/>
</dbReference>
<dbReference type="HOGENOM" id="CLU_001570_17_7_6"/>
<dbReference type="OrthoDB" id="9816402at2"/>
<dbReference type="PhylomeDB" id="Q8EAZ9"/>
<dbReference type="BioCyc" id="SONE211586:G1GMP-3473-MONOMER"/>
<dbReference type="UniPathway" id="UPA00140">
    <property type="reaction ID" value="UER00207"/>
</dbReference>
<dbReference type="Proteomes" id="UP000008186">
    <property type="component" value="Chromosome"/>
</dbReference>
<dbReference type="GO" id="GO:0005829">
    <property type="term" value="C:cytosol"/>
    <property type="evidence" value="ECO:0000318"/>
    <property type="project" value="GO_Central"/>
</dbReference>
<dbReference type="GO" id="GO:0050660">
    <property type="term" value="F:flavin adenine dinucleotide binding"/>
    <property type="evidence" value="ECO:0000318"/>
    <property type="project" value="GO_Central"/>
</dbReference>
<dbReference type="GO" id="GO:0010181">
    <property type="term" value="F:FMN binding"/>
    <property type="evidence" value="ECO:0000318"/>
    <property type="project" value="GO_Central"/>
</dbReference>
<dbReference type="GO" id="GO:0016491">
    <property type="term" value="F:oxidoreductase activity"/>
    <property type="evidence" value="ECO:0000318"/>
    <property type="project" value="GO_Central"/>
</dbReference>
<dbReference type="GO" id="GO:0004783">
    <property type="term" value="F:sulfite reductase (NADPH) activity"/>
    <property type="evidence" value="ECO:0007669"/>
    <property type="project" value="UniProtKB-UniRule"/>
</dbReference>
<dbReference type="GO" id="GO:0019344">
    <property type="term" value="P:cysteine biosynthetic process"/>
    <property type="evidence" value="ECO:0007669"/>
    <property type="project" value="UniProtKB-KW"/>
</dbReference>
<dbReference type="GO" id="GO:0070814">
    <property type="term" value="P:hydrogen sulfide biosynthetic process"/>
    <property type="evidence" value="ECO:0007669"/>
    <property type="project" value="UniProtKB-UniRule"/>
</dbReference>
<dbReference type="GO" id="GO:0000103">
    <property type="term" value="P:sulfate assimilation"/>
    <property type="evidence" value="ECO:0007669"/>
    <property type="project" value="UniProtKB-UniRule"/>
</dbReference>
<dbReference type="CDD" id="cd06199">
    <property type="entry name" value="SiR"/>
    <property type="match status" value="1"/>
</dbReference>
<dbReference type="FunFam" id="3.40.50.80:FF:000001">
    <property type="entry name" value="NADPH--cytochrome P450 reductase 1"/>
    <property type="match status" value="1"/>
</dbReference>
<dbReference type="FunFam" id="3.40.50.360:FF:000018">
    <property type="entry name" value="Sulfite reductase [NADPH] flavoprotein alpha-component"/>
    <property type="match status" value="1"/>
</dbReference>
<dbReference type="Gene3D" id="3.40.50.360">
    <property type="match status" value="1"/>
</dbReference>
<dbReference type="Gene3D" id="1.20.990.10">
    <property type="entry name" value="NADPH-cytochrome p450 Reductase, Chain A, domain 3"/>
    <property type="match status" value="1"/>
</dbReference>
<dbReference type="Gene3D" id="3.40.50.80">
    <property type="entry name" value="Nucleotide-binding domain of ferredoxin-NADP reductase (FNR) module"/>
    <property type="match status" value="1"/>
</dbReference>
<dbReference type="Gene3D" id="2.40.30.10">
    <property type="entry name" value="Translation factors"/>
    <property type="match status" value="1"/>
</dbReference>
<dbReference type="HAMAP" id="MF_01541">
    <property type="entry name" value="CysJ"/>
    <property type="match status" value="1"/>
</dbReference>
<dbReference type="InterPro" id="IPR010199">
    <property type="entry name" value="CysJ"/>
</dbReference>
<dbReference type="InterPro" id="IPR003097">
    <property type="entry name" value="CysJ-like_FAD-binding"/>
</dbReference>
<dbReference type="InterPro" id="IPR029758">
    <property type="entry name" value="CysJ_Proteobact"/>
</dbReference>
<dbReference type="InterPro" id="IPR017927">
    <property type="entry name" value="FAD-bd_FR_type"/>
</dbReference>
<dbReference type="InterPro" id="IPR001094">
    <property type="entry name" value="Flavdoxin-like"/>
</dbReference>
<dbReference type="InterPro" id="IPR008254">
    <property type="entry name" value="Flavodoxin/NO_synth"/>
</dbReference>
<dbReference type="InterPro" id="IPR001709">
    <property type="entry name" value="Flavoprot_Pyr_Nucl_cyt_Rdtase"/>
</dbReference>
<dbReference type="InterPro" id="IPR029039">
    <property type="entry name" value="Flavoprotein-like_sf"/>
</dbReference>
<dbReference type="InterPro" id="IPR039261">
    <property type="entry name" value="FNR_nucleotide-bd"/>
</dbReference>
<dbReference type="InterPro" id="IPR023173">
    <property type="entry name" value="NADPH_Cyt_P450_Rdtase_alpha"/>
</dbReference>
<dbReference type="InterPro" id="IPR001433">
    <property type="entry name" value="OxRdtase_FAD/NAD-bd"/>
</dbReference>
<dbReference type="InterPro" id="IPR017938">
    <property type="entry name" value="Riboflavin_synthase-like_b-brl"/>
</dbReference>
<dbReference type="NCBIfam" id="TIGR01931">
    <property type="entry name" value="cysJ"/>
    <property type="match status" value="1"/>
</dbReference>
<dbReference type="PANTHER" id="PTHR19384:SF128">
    <property type="entry name" value="NADPH OXIDOREDUCTASE A"/>
    <property type="match status" value="1"/>
</dbReference>
<dbReference type="PANTHER" id="PTHR19384">
    <property type="entry name" value="NITRIC OXIDE SYNTHASE-RELATED"/>
    <property type="match status" value="1"/>
</dbReference>
<dbReference type="Pfam" id="PF00667">
    <property type="entry name" value="FAD_binding_1"/>
    <property type="match status" value="1"/>
</dbReference>
<dbReference type="Pfam" id="PF00258">
    <property type="entry name" value="Flavodoxin_1"/>
    <property type="match status" value="1"/>
</dbReference>
<dbReference type="Pfam" id="PF00175">
    <property type="entry name" value="NAD_binding_1"/>
    <property type="match status" value="1"/>
</dbReference>
<dbReference type="PIRSF" id="PIRSF000207">
    <property type="entry name" value="SiR-FP_CysJ"/>
    <property type="match status" value="1"/>
</dbReference>
<dbReference type="PRINTS" id="PR00369">
    <property type="entry name" value="FLAVODOXIN"/>
</dbReference>
<dbReference type="PRINTS" id="PR00371">
    <property type="entry name" value="FPNCR"/>
</dbReference>
<dbReference type="SUPFAM" id="SSF52343">
    <property type="entry name" value="Ferredoxin reductase-like, C-terminal NADP-linked domain"/>
    <property type="match status" value="1"/>
</dbReference>
<dbReference type="SUPFAM" id="SSF52218">
    <property type="entry name" value="Flavoproteins"/>
    <property type="match status" value="1"/>
</dbReference>
<dbReference type="SUPFAM" id="SSF63380">
    <property type="entry name" value="Riboflavin synthase domain-like"/>
    <property type="match status" value="1"/>
</dbReference>
<dbReference type="PROSITE" id="PS51384">
    <property type="entry name" value="FAD_FR"/>
    <property type="match status" value="1"/>
</dbReference>
<dbReference type="PROSITE" id="PS50902">
    <property type="entry name" value="FLAVODOXIN_LIKE"/>
    <property type="match status" value="1"/>
</dbReference>
<comment type="function">
    <text evidence="1">Component of the sulfite reductase complex that catalyzes the 6-electron reduction of sulfite to sulfide. This is one of several activities required for the biosynthesis of L-cysteine from sulfate. The flavoprotein component catalyzes the electron flow from NADPH -&gt; FAD -&gt; FMN to the hemoprotein component.</text>
</comment>
<comment type="catalytic activity">
    <reaction evidence="1">
        <text>hydrogen sulfide + 3 NADP(+) + 3 H2O = sulfite + 3 NADPH + 4 H(+)</text>
        <dbReference type="Rhea" id="RHEA:13801"/>
        <dbReference type="ChEBI" id="CHEBI:15377"/>
        <dbReference type="ChEBI" id="CHEBI:15378"/>
        <dbReference type="ChEBI" id="CHEBI:17359"/>
        <dbReference type="ChEBI" id="CHEBI:29919"/>
        <dbReference type="ChEBI" id="CHEBI:57783"/>
        <dbReference type="ChEBI" id="CHEBI:58349"/>
        <dbReference type="EC" id="1.8.1.2"/>
    </reaction>
</comment>
<comment type="cofactor">
    <cofactor evidence="1">
        <name>FAD</name>
        <dbReference type="ChEBI" id="CHEBI:57692"/>
    </cofactor>
    <text evidence="1">Binds 1 FAD per subunit.</text>
</comment>
<comment type="cofactor">
    <cofactor evidence="1">
        <name>FMN</name>
        <dbReference type="ChEBI" id="CHEBI:58210"/>
    </cofactor>
    <text evidence="1">Binds 1 FMN per subunit.</text>
</comment>
<comment type="pathway">
    <text evidence="1">Sulfur metabolism; hydrogen sulfide biosynthesis; hydrogen sulfide from sulfite (NADPH route): step 1/1.</text>
</comment>
<comment type="subunit">
    <text evidence="1">Alpha(8)-beta(8). The alpha component is a flavoprotein, the beta component is a hemoprotein.</text>
</comment>
<comment type="similarity">
    <text evidence="1">Belongs to the NADPH-dependent sulphite reductase flavoprotein subunit CysJ family.</text>
</comment>
<comment type="similarity">
    <text evidence="1">In the N-terminal section; belongs to the flavodoxin family.</text>
</comment>
<comment type="similarity">
    <text evidence="1">In the C-terminal section; belongs to the flavoprotein pyridine nucleotide cytochrome reductase family.</text>
</comment>
<accession>Q8EAZ9</accession>
<reference key="1">
    <citation type="journal article" date="2002" name="Nat. Biotechnol.">
        <title>Genome sequence of the dissimilatory metal ion-reducing bacterium Shewanella oneidensis.</title>
        <authorList>
            <person name="Heidelberg J.F."/>
            <person name="Paulsen I.T."/>
            <person name="Nelson K.E."/>
            <person name="Gaidos E.J."/>
            <person name="Nelson W.C."/>
            <person name="Read T.D."/>
            <person name="Eisen J.A."/>
            <person name="Seshadri R."/>
            <person name="Ward N.L."/>
            <person name="Methe B.A."/>
            <person name="Clayton R.A."/>
            <person name="Meyer T."/>
            <person name="Tsapin A."/>
            <person name="Scott J."/>
            <person name="Beanan M.J."/>
            <person name="Brinkac L.M."/>
            <person name="Daugherty S.C."/>
            <person name="DeBoy R.T."/>
            <person name="Dodson R.J."/>
            <person name="Durkin A.S."/>
            <person name="Haft D.H."/>
            <person name="Kolonay J.F."/>
            <person name="Madupu R."/>
            <person name="Peterson J.D."/>
            <person name="Umayam L.A."/>
            <person name="White O."/>
            <person name="Wolf A.M."/>
            <person name="Vamathevan J.J."/>
            <person name="Weidman J.F."/>
            <person name="Impraim M."/>
            <person name="Lee K."/>
            <person name="Berry K.J."/>
            <person name="Lee C."/>
            <person name="Mueller J."/>
            <person name="Khouri H.M."/>
            <person name="Gill J."/>
            <person name="Utterback T.R."/>
            <person name="McDonald L.A."/>
            <person name="Feldblyum T.V."/>
            <person name="Smith H.O."/>
            <person name="Venter J.C."/>
            <person name="Nealson K.H."/>
            <person name="Fraser C.M."/>
        </authorList>
    </citation>
    <scope>NUCLEOTIDE SEQUENCE [LARGE SCALE GENOMIC DNA]</scope>
    <source>
        <strain>ATCC 700550 / JCM 31522 / CIP 106686 / LMG 19005 / NCIMB 14063 / MR-1</strain>
    </source>
</reference>
<gene>
    <name evidence="1" type="primary">cysJ</name>
    <name type="ordered locus">SO_3738</name>
</gene>
<proteinExistence type="inferred from homology"/>
<sequence>MLLKELSSLASPLSQSQVDKLKQLTAELNSVQLAWVSGYLAATANTSGSAIQVAASVTEAQAAQTVTILYGSQTGNGRGIAKALAEKAKTQGYSVNLASMGEYNVRQLKQETLLLLVVSTHGEGEAPDDAIELHKFLATKRAPQLNNLHYSVLALGDSSYEFFCQTGKDFDARLSALGAKALLPLVECDVDYEAAAGQWHADVLTAVKPLIQTTANVVALNEINSTSAQVASESEFTKQNPYRAEVLVSQKITGRDSDRDVRHVEIDLGESGLHYEVGDALGVWFSNSEILVGEILAGLGLAADAKVTVGSESISLKQALIDKKELTQLYPGLVKAWAELSASSELLALSEDKEQLRQFILNHQFVDLVTNYKLPAEANLDANKLLELLRPLTPRLYSIASSQTEVDTEVHLTVALVEDEHQGQTRFGGASHFLASAQEGAEVKVYVEPNKHFRLPENPDTPVIMIGPGTGVAPFRAFMQERVAQGAKGDSWLFFGNPHFEQDFLYQTEWQQYLKNGDLTRIDVAFSRDQAHKIYVQHRIKEQGQALWQWLQNGAHLYICGDAERMAKDVHQALLAVAVEFGGLSSEAAEEYFETLRSHKRYQKDVY</sequence>
<feature type="chain" id="PRO_0000199936" description="Sulfite reductase [NADPH] flavoprotein alpha-component">
    <location>
        <begin position="1"/>
        <end position="607"/>
    </location>
</feature>
<feature type="domain" description="Flavodoxin-like" evidence="1">
    <location>
        <begin position="66"/>
        <end position="204"/>
    </location>
</feature>
<feature type="domain" description="FAD-binding FR-type" evidence="1">
    <location>
        <begin position="239"/>
        <end position="456"/>
    </location>
</feature>
<feature type="binding site" evidence="1">
    <location>
        <begin position="72"/>
        <end position="77"/>
    </location>
    <ligand>
        <name>FMN</name>
        <dbReference type="ChEBI" id="CHEBI:58210"/>
    </ligand>
</feature>
<feature type="binding site" evidence="1">
    <location>
        <begin position="119"/>
        <end position="122"/>
    </location>
    <ligand>
        <name>FMN</name>
        <dbReference type="ChEBI" id="CHEBI:58210"/>
    </ligand>
</feature>
<feature type="binding site" evidence="1">
    <location>
        <begin position="155"/>
        <end position="164"/>
    </location>
    <ligand>
        <name>FMN</name>
        <dbReference type="ChEBI" id="CHEBI:58210"/>
    </ligand>
</feature>
<feature type="binding site" evidence="1">
    <location>
        <position position="327"/>
    </location>
    <ligand>
        <name>FAD</name>
        <dbReference type="ChEBI" id="CHEBI:57692"/>
    </ligand>
</feature>
<feature type="binding site" evidence="1">
    <location>
        <position position="361"/>
    </location>
    <ligand>
        <name>FAD</name>
        <dbReference type="ChEBI" id="CHEBI:57692"/>
    </ligand>
</feature>
<feature type="binding site" evidence="1">
    <location>
        <begin position="395"/>
        <end position="398"/>
    </location>
    <ligand>
        <name>FAD</name>
        <dbReference type="ChEBI" id="CHEBI:57692"/>
    </ligand>
</feature>
<feature type="binding site" evidence="1">
    <location>
        <begin position="413"/>
        <end position="415"/>
    </location>
    <ligand>
        <name>FAD</name>
        <dbReference type="ChEBI" id="CHEBI:57692"/>
    </ligand>
</feature>
<feature type="binding site" evidence="1">
    <location>
        <begin position="428"/>
        <end position="431"/>
    </location>
    <ligand>
        <name>FAD</name>
        <dbReference type="ChEBI" id="CHEBI:57692"/>
    </ligand>
</feature>
<feature type="binding site" evidence="1">
    <location>
        <begin position="527"/>
        <end position="528"/>
    </location>
    <ligand>
        <name>NADP(+)</name>
        <dbReference type="ChEBI" id="CHEBI:58349"/>
    </ligand>
</feature>
<feature type="binding site" evidence="1">
    <location>
        <begin position="533"/>
        <end position="537"/>
    </location>
    <ligand>
        <name>NADP(+)</name>
        <dbReference type="ChEBI" id="CHEBI:58349"/>
    </ligand>
</feature>
<feature type="binding site" evidence="1">
    <location>
        <position position="569"/>
    </location>
    <ligand>
        <name>NADP(+)</name>
        <dbReference type="ChEBI" id="CHEBI:58349"/>
    </ligand>
</feature>
<feature type="binding site" evidence="1">
    <location>
        <position position="607"/>
    </location>
    <ligand>
        <name>FAD</name>
        <dbReference type="ChEBI" id="CHEBI:57692"/>
    </ligand>
</feature>
<protein>
    <recommendedName>
        <fullName evidence="1">Sulfite reductase [NADPH] flavoprotein alpha-component</fullName>
        <shortName evidence="1">SiR-FP</shortName>
        <ecNumber evidence="1">1.8.1.2</ecNumber>
    </recommendedName>
</protein>